<name>PPNP_AERHH</name>
<feature type="chain" id="PRO_0000292781" description="Pyrimidine/purine nucleoside phosphorylase">
    <location>
        <begin position="1"/>
        <end position="94"/>
    </location>
</feature>
<keyword id="KW-0328">Glycosyltransferase</keyword>
<keyword id="KW-1185">Reference proteome</keyword>
<keyword id="KW-0808">Transferase</keyword>
<proteinExistence type="inferred from homology"/>
<sequence>MLKVNEYFDGNVKSIGFEQKGDKATVGVMEAGHYQFNTAAPERMTVVKGALTIQLADEDEWHTYEQGQSFDVAGHSSFKLEVKTPTAYLCEFLD</sequence>
<accession>A0KK62</accession>
<protein>
    <recommendedName>
        <fullName evidence="1">Pyrimidine/purine nucleoside phosphorylase</fullName>
        <ecNumber evidence="1">2.4.2.1</ecNumber>
        <ecNumber evidence="1">2.4.2.2</ecNumber>
    </recommendedName>
    <alternativeName>
        <fullName evidence="1">Adenosine phosphorylase</fullName>
    </alternativeName>
    <alternativeName>
        <fullName evidence="1">Cytidine phosphorylase</fullName>
    </alternativeName>
    <alternativeName>
        <fullName evidence="1">Guanosine phosphorylase</fullName>
    </alternativeName>
    <alternativeName>
        <fullName evidence="1">Inosine phosphorylase</fullName>
    </alternativeName>
    <alternativeName>
        <fullName evidence="1">Thymidine phosphorylase</fullName>
    </alternativeName>
    <alternativeName>
        <fullName evidence="1">Uridine phosphorylase</fullName>
    </alternativeName>
    <alternativeName>
        <fullName evidence="1">Xanthosine phosphorylase</fullName>
    </alternativeName>
</protein>
<dbReference type="EC" id="2.4.2.1" evidence="1"/>
<dbReference type="EC" id="2.4.2.2" evidence="1"/>
<dbReference type="EMBL" id="CP000462">
    <property type="protein sequence ID" value="ABK39724.1"/>
    <property type="status" value="ALT_INIT"/>
    <property type="molecule type" value="Genomic_DNA"/>
</dbReference>
<dbReference type="RefSeq" id="WP_010633884.1">
    <property type="nucleotide sequence ID" value="NC_008570.1"/>
</dbReference>
<dbReference type="RefSeq" id="YP_856663.1">
    <property type="nucleotide sequence ID" value="NC_008570.1"/>
</dbReference>
<dbReference type="SMR" id="A0KK62"/>
<dbReference type="STRING" id="380703.AHA_2139"/>
<dbReference type="EnsemblBacteria" id="ABK39724">
    <property type="protein sequence ID" value="ABK39724"/>
    <property type="gene ID" value="AHA_2139"/>
</dbReference>
<dbReference type="KEGG" id="aha:AHA_2139"/>
<dbReference type="PATRIC" id="fig|380703.7.peg.2140"/>
<dbReference type="eggNOG" id="COG3123">
    <property type="taxonomic scope" value="Bacteria"/>
</dbReference>
<dbReference type="HOGENOM" id="CLU_157874_0_0_6"/>
<dbReference type="OrthoDB" id="9793848at2"/>
<dbReference type="Proteomes" id="UP000000756">
    <property type="component" value="Chromosome"/>
</dbReference>
<dbReference type="GO" id="GO:0005829">
    <property type="term" value="C:cytosol"/>
    <property type="evidence" value="ECO:0007669"/>
    <property type="project" value="TreeGrafter"/>
</dbReference>
<dbReference type="GO" id="GO:0047975">
    <property type="term" value="F:guanosine phosphorylase activity"/>
    <property type="evidence" value="ECO:0007669"/>
    <property type="project" value="UniProtKB-EC"/>
</dbReference>
<dbReference type="GO" id="GO:0004731">
    <property type="term" value="F:purine-nucleoside phosphorylase activity"/>
    <property type="evidence" value="ECO:0007669"/>
    <property type="project" value="UniProtKB-UniRule"/>
</dbReference>
<dbReference type="GO" id="GO:0009032">
    <property type="term" value="F:thymidine phosphorylase activity"/>
    <property type="evidence" value="ECO:0007669"/>
    <property type="project" value="UniProtKB-EC"/>
</dbReference>
<dbReference type="GO" id="GO:0004850">
    <property type="term" value="F:uridine phosphorylase activity"/>
    <property type="evidence" value="ECO:0007669"/>
    <property type="project" value="UniProtKB-EC"/>
</dbReference>
<dbReference type="CDD" id="cd20296">
    <property type="entry name" value="cupin_PpnP-like"/>
    <property type="match status" value="1"/>
</dbReference>
<dbReference type="FunFam" id="2.60.120.10:FF:000016">
    <property type="entry name" value="Pyrimidine/purine nucleoside phosphorylase"/>
    <property type="match status" value="1"/>
</dbReference>
<dbReference type="Gene3D" id="2.60.120.10">
    <property type="entry name" value="Jelly Rolls"/>
    <property type="match status" value="1"/>
</dbReference>
<dbReference type="HAMAP" id="MF_01537">
    <property type="entry name" value="Nucleos_phosphorylase_PpnP"/>
    <property type="match status" value="1"/>
</dbReference>
<dbReference type="InterPro" id="IPR009664">
    <property type="entry name" value="Ppnp"/>
</dbReference>
<dbReference type="InterPro" id="IPR014710">
    <property type="entry name" value="RmlC-like_jellyroll"/>
</dbReference>
<dbReference type="InterPro" id="IPR011051">
    <property type="entry name" value="RmlC_Cupin_sf"/>
</dbReference>
<dbReference type="PANTHER" id="PTHR36540">
    <property type="entry name" value="PYRIMIDINE/PURINE NUCLEOSIDE PHOSPHORYLASE"/>
    <property type="match status" value="1"/>
</dbReference>
<dbReference type="PANTHER" id="PTHR36540:SF1">
    <property type="entry name" value="PYRIMIDINE_PURINE NUCLEOSIDE PHOSPHORYLASE"/>
    <property type="match status" value="1"/>
</dbReference>
<dbReference type="Pfam" id="PF06865">
    <property type="entry name" value="Ppnp"/>
    <property type="match status" value="1"/>
</dbReference>
<dbReference type="SUPFAM" id="SSF51182">
    <property type="entry name" value="RmlC-like cupins"/>
    <property type="match status" value="1"/>
</dbReference>
<comment type="function">
    <text evidence="1">Catalyzes the phosphorolysis of diverse nucleosides, yielding D-ribose 1-phosphate and the respective free bases. Can use uridine, adenosine, guanosine, cytidine, thymidine, inosine and xanthosine as substrates. Also catalyzes the reverse reactions.</text>
</comment>
<comment type="catalytic activity">
    <reaction evidence="1">
        <text>a purine D-ribonucleoside + phosphate = a purine nucleobase + alpha-D-ribose 1-phosphate</text>
        <dbReference type="Rhea" id="RHEA:19805"/>
        <dbReference type="ChEBI" id="CHEBI:26386"/>
        <dbReference type="ChEBI" id="CHEBI:43474"/>
        <dbReference type="ChEBI" id="CHEBI:57720"/>
        <dbReference type="ChEBI" id="CHEBI:142355"/>
        <dbReference type="EC" id="2.4.2.1"/>
    </reaction>
</comment>
<comment type="catalytic activity">
    <reaction evidence="1">
        <text>adenosine + phosphate = alpha-D-ribose 1-phosphate + adenine</text>
        <dbReference type="Rhea" id="RHEA:27642"/>
        <dbReference type="ChEBI" id="CHEBI:16335"/>
        <dbReference type="ChEBI" id="CHEBI:16708"/>
        <dbReference type="ChEBI" id="CHEBI:43474"/>
        <dbReference type="ChEBI" id="CHEBI:57720"/>
        <dbReference type="EC" id="2.4.2.1"/>
    </reaction>
</comment>
<comment type="catalytic activity">
    <reaction evidence="1">
        <text>cytidine + phosphate = cytosine + alpha-D-ribose 1-phosphate</text>
        <dbReference type="Rhea" id="RHEA:52540"/>
        <dbReference type="ChEBI" id="CHEBI:16040"/>
        <dbReference type="ChEBI" id="CHEBI:17562"/>
        <dbReference type="ChEBI" id="CHEBI:43474"/>
        <dbReference type="ChEBI" id="CHEBI:57720"/>
        <dbReference type="EC" id="2.4.2.2"/>
    </reaction>
</comment>
<comment type="catalytic activity">
    <reaction evidence="1">
        <text>guanosine + phosphate = alpha-D-ribose 1-phosphate + guanine</text>
        <dbReference type="Rhea" id="RHEA:13233"/>
        <dbReference type="ChEBI" id="CHEBI:16235"/>
        <dbReference type="ChEBI" id="CHEBI:16750"/>
        <dbReference type="ChEBI" id="CHEBI:43474"/>
        <dbReference type="ChEBI" id="CHEBI:57720"/>
        <dbReference type="EC" id="2.4.2.1"/>
    </reaction>
</comment>
<comment type="catalytic activity">
    <reaction evidence="1">
        <text>inosine + phosphate = alpha-D-ribose 1-phosphate + hypoxanthine</text>
        <dbReference type="Rhea" id="RHEA:27646"/>
        <dbReference type="ChEBI" id="CHEBI:17368"/>
        <dbReference type="ChEBI" id="CHEBI:17596"/>
        <dbReference type="ChEBI" id="CHEBI:43474"/>
        <dbReference type="ChEBI" id="CHEBI:57720"/>
        <dbReference type="EC" id="2.4.2.1"/>
    </reaction>
</comment>
<comment type="catalytic activity">
    <reaction evidence="1">
        <text>thymidine + phosphate = 2-deoxy-alpha-D-ribose 1-phosphate + thymine</text>
        <dbReference type="Rhea" id="RHEA:16037"/>
        <dbReference type="ChEBI" id="CHEBI:17748"/>
        <dbReference type="ChEBI" id="CHEBI:17821"/>
        <dbReference type="ChEBI" id="CHEBI:43474"/>
        <dbReference type="ChEBI" id="CHEBI:57259"/>
        <dbReference type="EC" id="2.4.2.2"/>
    </reaction>
</comment>
<comment type="catalytic activity">
    <reaction evidence="1">
        <text>uridine + phosphate = alpha-D-ribose 1-phosphate + uracil</text>
        <dbReference type="Rhea" id="RHEA:24388"/>
        <dbReference type="ChEBI" id="CHEBI:16704"/>
        <dbReference type="ChEBI" id="CHEBI:17568"/>
        <dbReference type="ChEBI" id="CHEBI:43474"/>
        <dbReference type="ChEBI" id="CHEBI:57720"/>
        <dbReference type="EC" id="2.4.2.2"/>
    </reaction>
</comment>
<comment type="catalytic activity">
    <reaction evidence="1">
        <text>xanthosine + phosphate = alpha-D-ribose 1-phosphate + xanthine</text>
        <dbReference type="Rhea" id="RHEA:27638"/>
        <dbReference type="ChEBI" id="CHEBI:17712"/>
        <dbReference type="ChEBI" id="CHEBI:18107"/>
        <dbReference type="ChEBI" id="CHEBI:43474"/>
        <dbReference type="ChEBI" id="CHEBI:57720"/>
        <dbReference type="EC" id="2.4.2.1"/>
    </reaction>
</comment>
<comment type="similarity">
    <text evidence="1">Belongs to the nucleoside phosphorylase PpnP family.</text>
</comment>
<comment type="sequence caution" evidence="2">
    <conflict type="erroneous initiation">
        <sequence resource="EMBL-CDS" id="ABK39724"/>
    </conflict>
</comment>
<evidence type="ECO:0000255" key="1">
    <source>
        <dbReference type="HAMAP-Rule" id="MF_01537"/>
    </source>
</evidence>
<evidence type="ECO:0000305" key="2"/>
<gene>
    <name evidence="1" type="primary">ppnP</name>
    <name type="ordered locus">AHA_2139</name>
</gene>
<organism>
    <name type="scientific">Aeromonas hydrophila subsp. hydrophila (strain ATCC 7966 / DSM 30187 / BCRC 13018 / CCUG 14551 / JCM 1027 / KCTC 2358 / NCIMB 9240 / NCTC 8049)</name>
    <dbReference type="NCBI Taxonomy" id="380703"/>
    <lineage>
        <taxon>Bacteria</taxon>
        <taxon>Pseudomonadati</taxon>
        <taxon>Pseudomonadota</taxon>
        <taxon>Gammaproteobacteria</taxon>
        <taxon>Aeromonadales</taxon>
        <taxon>Aeromonadaceae</taxon>
        <taxon>Aeromonas</taxon>
    </lineage>
</organism>
<reference key="1">
    <citation type="journal article" date="2006" name="J. Bacteriol.">
        <title>Genome sequence of Aeromonas hydrophila ATCC 7966T: jack of all trades.</title>
        <authorList>
            <person name="Seshadri R."/>
            <person name="Joseph S.W."/>
            <person name="Chopra A.K."/>
            <person name="Sha J."/>
            <person name="Shaw J."/>
            <person name="Graf J."/>
            <person name="Haft D.H."/>
            <person name="Wu M."/>
            <person name="Ren Q."/>
            <person name="Rosovitz M.J."/>
            <person name="Madupu R."/>
            <person name="Tallon L."/>
            <person name="Kim M."/>
            <person name="Jin S."/>
            <person name="Vuong H."/>
            <person name="Stine O.C."/>
            <person name="Ali A."/>
            <person name="Horneman A.J."/>
            <person name="Heidelberg J.F."/>
        </authorList>
    </citation>
    <scope>NUCLEOTIDE SEQUENCE [LARGE SCALE GENOMIC DNA]</scope>
    <source>
        <strain>ATCC 7966 / DSM 30187 / BCRC 13018 / CCUG 14551 / JCM 1027 / KCTC 2358 / NCIMB 9240 / NCTC 8049</strain>
    </source>
</reference>